<comment type="function">
    <text evidence="1">Involved in peptide bond synthesis. Alleviates ribosome stalling that occurs when 3 or more consecutive Pro residues or the sequence PPG is present in a protein, possibly by augmenting the peptidyl transferase activity of the ribosome. Modification of Lys-34 is required for alleviation.</text>
</comment>
<comment type="pathway">
    <text evidence="1">Protein biosynthesis; polypeptide chain elongation.</text>
</comment>
<comment type="subcellular location">
    <subcellularLocation>
        <location evidence="1">Cytoplasm</location>
    </subcellularLocation>
</comment>
<comment type="PTM">
    <text evidence="1">Is beta-lysylated on the epsilon-amino group of Lys-34 by the combined action of EpmA and EpmB, and then hydroxylated on the C5 position of the same residue by EpmC. Lysylation is critical for the stimulatory effect of EF-P on peptide-bond formation. The lysylation moiety would extend toward the peptidyltransferase center and stabilize the terminal 3-CCA end of the tRNA. The hydroxylation of the C5 position on Lys-34 would allow additional potential stabilizing hydrogen-bond interactions with the P-tRNA.</text>
</comment>
<comment type="similarity">
    <text evidence="1">Belongs to the elongation factor P family.</text>
</comment>
<organism>
    <name type="scientific">Escherichia coli (strain 55989 / EAEC)</name>
    <dbReference type="NCBI Taxonomy" id="585055"/>
    <lineage>
        <taxon>Bacteria</taxon>
        <taxon>Pseudomonadati</taxon>
        <taxon>Pseudomonadota</taxon>
        <taxon>Gammaproteobacteria</taxon>
        <taxon>Enterobacterales</taxon>
        <taxon>Enterobacteriaceae</taxon>
        <taxon>Escherichia</taxon>
    </lineage>
</organism>
<keyword id="KW-0963">Cytoplasm</keyword>
<keyword id="KW-0251">Elongation factor</keyword>
<keyword id="KW-0379">Hydroxylation</keyword>
<keyword id="KW-0648">Protein biosynthesis</keyword>
<keyword id="KW-1185">Reference proteome</keyword>
<protein>
    <recommendedName>
        <fullName evidence="1">Elongation factor P</fullName>
        <shortName evidence="1">EF-P</shortName>
    </recommendedName>
</protein>
<proteinExistence type="inferred from homology"/>
<name>EFP_ECO55</name>
<gene>
    <name evidence="1" type="primary">efp</name>
    <name type="ordered locus">EC55989_4702</name>
</gene>
<evidence type="ECO:0000255" key="1">
    <source>
        <dbReference type="HAMAP-Rule" id="MF_00141"/>
    </source>
</evidence>
<sequence>MATYYSNDFRAGLKIMLDGEPYAVEASEFVKPGKGQAFARVKLRRLLTGTRVEKTFKSTDSAEGADVVDMNLTYLYNDGEFWHFMNNETFEQLSADAKAIGDNAKWLLDQAECIVTLWNGQPISVTPPNFVELEIVDTDPGLKGDTAGTGGKPATLSTGAVVKVPLFVQIGEVIKVDTRSGEYVSRVK</sequence>
<dbReference type="EMBL" id="CU928145">
    <property type="protein sequence ID" value="CAV01602.1"/>
    <property type="molecule type" value="Genomic_DNA"/>
</dbReference>
<dbReference type="RefSeq" id="WP_000257278.1">
    <property type="nucleotide sequence ID" value="NZ_CP028304.1"/>
</dbReference>
<dbReference type="SMR" id="B7LC03"/>
<dbReference type="GeneID" id="93777677"/>
<dbReference type="KEGG" id="eck:EC55989_4702"/>
<dbReference type="HOGENOM" id="CLU_074944_0_0_6"/>
<dbReference type="UniPathway" id="UPA00345"/>
<dbReference type="Proteomes" id="UP000000746">
    <property type="component" value="Chromosome"/>
</dbReference>
<dbReference type="GO" id="GO:0005829">
    <property type="term" value="C:cytosol"/>
    <property type="evidence" value="ECO:0007669"/>
    <property type="project" value="UniProtKB-ARBA"/>
</dbReference>
<dbReference type="GO" id="GO:0003746">
    <property type="term" value="F:translation elongation factor activity"/>
    <property type="evidence" value="ECO:0007669"/>
    <property type="project" value="UniProtKB-UniRule"/>
</dbReference>
<dbReference type="GO" id="GO:0043043">
    <property type="term" value="P:peptide biosynthetic process"/>
    <property type="evidence" value="ECO:0007669"/>
    <property type="project" value="InterPro"/>
</dbReference>
<dbReference type="CDD" id="cd04470">
    <property type="entry name" value="S1_EF-P_repeat_1"/>
    <property type="match status" value="1"/>
</dbReference>
<dbReference type="CDD" id="cd05794">
    <property type="entry name" value="S1_EF-P_repeat_2"/>
    <property type="match status" value="1"/>
</dbReference>
<dbReference type="FunFam" id="2.30.30.30:FF:000003">
    <property type="entry name" value="Elongation factor P"/>
    <property type="match status" value="1"/>
</dbReference>
<dbReference type="FunFam" id="2.40.50.140:FF:000004">
    <property type="entry name" value="Elongation factor P"/>
    <property type="match status" value="1"/>
</dbReference>
<dbReference type="FunFam" id="2.40.50.140:FF:000009">
    <property type="entry name" value="Elongation factor P"/>
    <property type="match status" value="1"/>
</dbReference>
<dbReference type="Gene3D" id="2.30.30.30">
    <property type="match status" value="1"/>
</dbReference>
<dbReference type="Gene3D" id="2.40.50.140">
    <property type="entry name" value="Nucleic acid-binding proteins"/>
    <property type="match status" value="2"/>
</dbReference>
<dbReference type="HAMAP" id="MF_00141">
    <property type="entry name" value="EF_P"/>
    <property type="match status" value="1"/>
</dbReference>
<dbReference type="InterPro" id="IPR015365">
    <property type="entry name" value="Elong-fact-P_C"/>
</dbReference>
<dbReference type="InterPro" id="IPR012340">
    <property type="entry name" value="NA-bd_OB-fold"/>
</dbReference>
<dbReference type="InterPro" id="IPR014722">
    <property type="entry name" value="Rib_uL2_dom2"/>
</dbReference>
<dbReference type="InterPro" id="IPR020599">
    <property type="entry name" value="Transl_elong_fac_P/YeiP"/>
</dbReference>
<dbReference type="InterPro" id="IPR013185">
    <property type="entry name" value="Transl_elong_KOW-like"/>
</dbReference>
<dbReference type="InterPro" id="IPR001059">
    <property type="entry name" value="Transl_elong_P/YeiP_cen"/>
</dbReference>
<dbReference type="InterPro" id="IPR013852">
    <property type="entry name" value="Transl_elong_P/YeiP_CS"/>
</dbReference>
<dbReference type="InterPro" id="IPR011768">
    <property type="entry name" value="Transl_elongation_fac_P"/>
</dbReference>
<dbReference type="InterPro" id="IPR008991">
    <property type="entry name" value="Translation_prot_SH3-like_sf"/>
</dbReference>
<dbReference type="NCBIfam" id="TIGR00038">
    <property type="entry name" value="efp"/>
    <property type="match status" value="1"/>
</dbReference>
<dbReference type="NCBIfam" id="NF001810">
    <property type="entry name" value="PRK00529.1"/>
    <property type="match status" value="1"/>
</dbReference>
<dbReference type="PANTHER" id="PTHR30053">
    <property type="entry name" value="ELONGATION FACTOR P"/>
    <property type="match status" value="1"/>
</dbReference>
<dbReference type="PANTHER" id="PTHR30053:SF12">
    <property type="entry name" value="ELONGATION FACTOR P (EF-P) FAMILY PROTEIN"/>
    <property type="match status" value="1"/>
</dbReference>
<dbReference type="Pfam" id="PF01132">
    <property type="entry name" value="EFP"/>
    <property type="match status" value="1"/>
</dbReference>
<dbReference type="Pfam" id="PF08207">
    <property type="entry name" value="EFP_N"/>
    <property type="match status" value="1"/>
</dbReference>
<dbReference type="Pfam" id="PF09285">
    <property type="entry name" value="Elong-fact-P_C"/>
    <property type="match status" value="1"/>
</dbReference>
<dbReference type="PIRSF" id="PIRSF005901">
    <property type="entry name" value="EF-P"/>
    <property type="match status" value="1"/>
</dbReference>
<dbReference type="SMART" id="SM01185">
    <property type="entry name" value="EFP"/>
    <property type="match status" value="1"/>
</dbReference>
<dbReference type="SMART" id="SM00841">
    <property type="entry name" value="Elong-fact-P_C"/>
    <property type="match status" value="1"/>
</dbReference>
<dbReference type="SUPFAM" id="SSF50249">
    <property type="entry name" value="Nucleic acid-binding proteins"/>
    <property type="match status" value="2"/>
</dbReference>
<dbReference type="SUPFAM" id="SSF50104">
    <property type="entry name" value="Translation proteins SH3-like domain"/>
    <property type="match status" value="1"/>
</dbReference>
<dbReference type="PROSITE" id="PS01275">
    <property type="entry name" value="EFP"/>
    <property type="match status" value="1"/>
</dbReference>
<accession>B7LC03</accession>
<reference key="1">
    <citation type="journal article" date="2009" name="PLoS Genet.">
        <title>Organised genome dynamics in the Escherichia coli species results in highly diverse adaptive paths.</title>
        <authorList>
            <person name="Touchon M."/>
            <person name="Hoede C."/>
            <person name="Tenaillon O."/>
            <person name="Barbe V."/>
            <person name="Baeriswyl S."/>
            <person name="Bidet P."/>
            <person name="Bingen E."/>
            <person name="Bonacorsi S."/>
            <person name="Bouchier C."/>
            <person name="Bouvet O."/>
            <person name="Calteau A."/>
            <person name="Chiapello H."/>
            <person name="Clermont O."/>
            <person name="Cruveiller S."/>
            <person name="Danchin A."/>
            <person name="Diard M."/>
            <person name="Dossat C."/>
            <person name="Karoui M.E."/>
            <person name="Frapy E."/>
            <person name="Garry L."/>
            <person name="Ghigo J.M."/>
            <person name="Gilles A.M."/>
            <person name="Johnson J."/>
            <person name="Le Bouguenec C."/>
            <person name="Lescat M."/>
            <person name="Mangenot S."/>
            <person name="Martinez-Jehanne V."/>
            <person name="Matic I."/>
            <person name="Nassif X."/>
            <person name="Oztas S."/>
            <person name="Petit M.A."/>
            <person name="Pichon C."/>
            <person name="Rouy Z."/>
            <person name="Ruf C.S."/>
            <person name="Schneider D."/>
            <person name="Tourret J."/>
            <person name="Vacherie B."/>
            <person name="Vallenet D."/>
            <person name="Medigue C."/>
            <person name="Rocha E.P.C."/>
            <person name="Denamur E."/>
        </authorList>
    </citation>
    <scope>NUCLEOTIDE SEQUENCE [LARGE SCALE GENOMIC DNA]</scope>
    <source>
        <strain>55989 / EAEC</strain>
    </source>
</reference>
<feature type="chain" id="PRO_1000123009" description="Elongation factor P">
    <location>
        <begin position="1"/>
        <end position="188"/>
    </location>
</feature>
<feature type="modified residue" description="N6-(3,6-diaminohexanoyl)-5-hydroxylysine" evidence="1">
    <location>
        <position position="34"/>
    </location>
</feature>